<proteinExistence type="inferred from homology"/>
<keyword id="KW-0067">ATP-binding</keyword>
<keyword id="KW-0963">Cytoplasm</keyword>
<keyword id="KW-0275">Fatty acid biosynthesis</keyword>
<keyword id="KW-0276">Fatty acid metabolism</keyword>
<keyword id="KW-0444">Lipid biosynthesis</keyword>
<keyword id="KW-0443">Lipid metabolism</keyword>
<keyword id="KW-0547">Nucleotide-binding</keyword>
<keyword id="KW-0808">Transferase</keyword>
<evidence type="ECO:0000255" key="1">
    <source>
        <dbReference type="HAMAP-Rule" id="MF_00823"/>
    </source>
</evidence>
<evidence type="ECO:0000255" key="2">
    <source>
        <dbReference type="PROSITE-ProRule" id="PRU01137"/>
    </source>
</evidence>
<dbReference type="EC" id="2.1.3.15" evidence="1"/>
<dbReference type="EMBL" id="AE017262">
    <property type="protein sequence ID" value="AAT04369.1"/>
    <property type="molecule type" value="Genomic_DNA"/>
</dbReference>
<dbReference type="RefSeq" id="WP_003726608.1">
    <property type="nucleotide sequence ID" value="NC_002973.6"/>
</dbReference>
<dbReference type="SMR" id="Q71Z95"/>
<dbReference type="KEGG" id="lmf:LMOf2365_1594"/>
<dbReference type="HOGENOM" id="CLU_015486_0_2_9"/>
<dbReference type="UniPathway" id="UPA00655">
    <property type="reaction ID" value="UER00711"/>
</dbReference>
<dbReference type="GO" id="GO:0009317">
    <property type="term" value="C:acetyl-CoA carboxylase complex"/>
    <property type="evidence" value="ECO:0007669"/>
    <property type="project" value="InterPro"/>
</dbReference>
<dbReference type="GO" id="GO:0003989">
    <property type="term" value="F:acetyl-CoA carboxylase activity"/>
    <property type="evidence" value="ECO:0007669"/>
    <property type="project" value="InterPro"/>
</dbReference>
<dbReference type="GO" id="GO:0005524">
    <property type="term" value="F:ATP binding"/>
    <property type="evidence" value="ECO:0007669"/>
    <property type="project" value="UniProtKB-KW"/>
</dbReference>
<dbReference type="GO" id="GO:0016743">
    <property type="term" value="F:carboxyl- or carbamoyltransferase activity"/>
    <property type="evidence" value="ECO:0007669"/>
    <property type="project" value="UniProtKB-UniRule"/>
</dbReference>
<dbReference type="GO" id="GO:0006633">
    <property type="term" value="P:fatty acid biosynthetic process"/>
    <property type="evidence" value="ECO:0007669"/>
    <property type="project" value="UniProtKB-KW"/>
</dbReference>
<dbReference type="GO" id="GO:2001295">
    <property type="term" value="P:malonyl-CoA biosynthetic process"/>
    <property type="evidence" value="ECO:0007669"/>
    <property type="project" value="UniProtKB-UniRule"/>
</dbReference>
<dbReference type="Gene3D" id="3.90.226.10">
    <property type="entry name" value="2-enoyl-CoA Hydratase, Chain A, domain 1"/>
    <property type="match status" value="1"/>
</dbReference>
<dbReference type="HAMAP" id="MF_00823">
    <property type="entry name" value="AcetylCoA_CT_alpha"/>
    <property type="match status" value="1"/>
</dbReference>
<dbReference type="InterPro" id="IPR001095">
    <property type="entry name" value="Acetyl_CoA_COase_a_su"/>
</dbReference>
<dbReference type="InterPro" id="IPR029045">
    <property type="entry name" value="ClpP/crotonase-like_dom_sf"/>
</dbReference>
<dbReference type="InterPro" id="IPR011763">
    <property type="entry name" value="COA_CT_C"/>
</dbReference>
<dbReference type="NCBIfam" id="TIGR00513">
    <property type="entry name" value="accA"/>
    <property type="match status" value="1"/>
</dbReference>
<dbReference type="NCBIfam" id="NF041504">
    <property type="entry name" value="AccA_sub"/>
    <property type="match status" value="1"/>
</dbReference>
<dbReference type="NCBIfam" id="NF004344">
    <property type="entry name" value="PRK05724.1"/>
    <property type="match status" value="1"/>
</dbReference>
<dbReference type="PANTHER" id="PTHR42853">
    <property type="entry name" value="ACETYL-COENZYME A CARBOXYLASE CARBOXYL TRANSFERASE SUBUNIT ALPHA"/>
    <property type="match status" value="1"/>
</dbReference>
<dbReference type="PANTHER" id="PTHR42853:SF3">
    <property type="entry name" value="ACETYL-COENZYME A CARBOXYLASE CARBOXYL TRANSFERASE SUBUNIT ALPHA, CHLOROPLASTIC"/>
    <property type="match status" value="1"/>
</dbReference>
<dbReference type="Pfam" id="PF03255">
    <property type="entry name" value="ACCA"/>
    <property type="match status" value="1"/>
</dbReference>
<dbReference type="PRINTS" id="PR01069">
    <property type="entry name" value="ACCCTRFRASEA"/>
</dbReference>
<dbReference type="SUPFAM" id="SSF52096">
    <property type="entry name" value="ClpP/crotonase"/>
    <property type="match status" value="1"/>
</dbReference>
<dbReference type="PROSITE" id="PS50989">
    <property type="entry name" value="COA_CT_CTER"/>
    <property type="match status" value="1"/>
</dbReference>
<reference key="1">
    <citation type="journal article" date="2004" name="Nucleic Acids Res.">
        <title>Whole genome comparisons of serotype 4b and 1/2a strains of the food-borne pathogen Listeria monocytogenes reveal new insights into the core genome components of this species.</title>
        <authorList>
            <person name="Nelson K.E."/>
            <person name="Fouts D.E."/>
            <person name="Mongodin E.F."/>
            <person name="Ravel J."/>
            <person name="DeBoy R.T."/>
            <person name="Kolonay J.F."/>
            <person name="Rasko D.A."/>
            <person name="Angiuoli S.V."/>
            <person name="Gill S.R."/>
            <person name="Paulsen I.T."/>
            <person name="Peterson J.D."/>
            <person name="White O."/>
            <person name="Nelson W.C."/>
            <person name="Nierman W.C."/>
            <person name="Beanan M.J."/>
            <person name="Brinkac L.M."/>
            <person name="Daugherty S.C."/>
            <person name="Dodson R.J."/>
            <person name="Durkin A.S."/>
            <person name="Madupu R."/>
            <person name="Haft D.H."/>
            <person name="Selengut J."/>
            <person name="Van Aken S.E."/>
            <person name="Khouri H.M."/>
            <person name="Fedorova N."/>
            <person name="Forberger H.A."/>
            <person name="Tran B."/>
            <person name="Kathariou S."/>
            <person name="Wonderling L.D."/>
            <person name="Uhlich G.A."/>
            <person name="Bayles D.O."/>
            <person name="Luchansky J.B."/>
            <person name="Fraser C.M."/>
        </authorList>
    </citation>
    <scope>NUCLEOTIDE SEQUENCE [LARGE SCALE GENOMIC DNA]</scope>
    <source>
        <strain>F2365</strain>
    </source>
</reference>
<feature type="chain" id="PRO_0000223784" description="Acetyl-coenzyme A carboxylase carboxyl transferase subunit alpha">
    <location>
        <begin position="1"/>
        <end position="318"/>
    </location>
</feature>
<feature type="domain" description="CoA carboxyltransferase C-terminal" evidence="2">
    <location>
        <begin position="38"/>
        <end position="292"/>
    </location>
</feature>
<organism>
    <name type="scientific">Listeria monocytogenes serotype 4b (strain F2365)</name>
    <dbReference type="NCBI Taxonomy" id="265669"/>
    <lineage>
        <taxon>Bacteria</taxon>
        <taxon>Bacillati</taxon>
        <taxon>Bacillota</taxon>
        <taxon>Bacilli</taxon>
        <taxon>Bacillales</taxon>
        <taxon>Listeriaceae</taxon>
        <taxon>Listeria</taxon>
    </lineage>
</organism>
<name>ACCA_LISMF</name>
<protein>
    <recommendedName>
        <fullName evidence="1">Acetyl-coenzyme A carboxylase carboxyl transferase subunit alpha</fullName>
        <shortName evidence="1">ACCase subunit alpha</shortName>
        <shortName evidence="1">Acetyl-CoA carboxylase carboxyltransferase subunit alpha</shortName>
        <ecNumber evidence="1">2.1.3.15</ecNumber>
    </recommendedName>
</protein>
<comment type="function">
    <text evidence="1">Component of the acetyl coenzyme A carboxylase (ACC) complex. First, biotin carboxylase catalyzes the carboxylation of biotin on its carrier protein (BCCP) and then the CO(2) group is transferred by the carboxyltransferase to acetyl-CoA to form malonyl-CoA.</text>
</comment>
<comment type="catalytic activity">
    <reaction evidence="1">
        <text>N(6)-carboxybiotinyl-L-lysyl-[protein] + acetyl-CoA = N(6)-biotinyl-L-lysyl-[protein] + malonyl-CoA</text>
        <dbReference type="Rhea" id="RHEA:54728"/>
        <dbReference type="Rhea" id="RHEA-COMP:10505"/>
        <dbReference type="Rhea" id="RHEA-COMP:10506"/>
        <dbReference type="ChEBI" id="CHEBI:57288"/>
        <dbReference type="ChEBI" id="CHEBI:57384"/>
        <dbReference type="ChEBI" id="CHEBI:83144"/>
        <dbReference type="ChEBI" id="CHEBI:83145"/>
        <dbReference type="EC" id="2.1.3.15"/>
    </reaction>
</comment>
<comment type="pathway">
    <text evidence="1">Lipid metabolism; malonyl-CoA biosynthesis; malonyl-CoA from acetyl-CoA: step 1/1.</text>
</comment>
<comment type="subunit">
    <text evidence="1">Acetyl-CoA carboxylase is a heterohexamer composed of biotin carboxyl carrier protein (AccB), biotin carboxylase (AccC) and two subunits each of ACCase subunit alpha (AccA) and ACCase subunit beta (AccD).</text>
</comment>
<comment type="subcellular location">
    <subcellularLocation>
        <location evidence="1">Cytoplasm</location>
    </subcellularLocation>
</comment>
<comment type="similarity">
    <text evidence="1">Belongs to the AccA family.</text>
</comment>
<sequence length="318" mass="35263">MANEMEFEKPILELKSKIADLKEYNETSDVDLTNEIEKLEKRLAKLESSIYSNMTAWDKFQVARHPERPTTLDYISLLFEDFMELHGDRAFGDDAAIVGGIATFHGIPVTVIGHQRGKDTKDNLHRNFGMPHPEGFRKALRLMKQADKFGRPIICFIDTKGAYPGRAAEERGQSEAIARNLYEMSDMKVPIISIVIGEGGSGGALALGVGNQIFMLENAVFSVISPEGAAAILWKDASQAKKAAESMRITAGDLFELGITDGIIPEVKGGAHRDLNAQAEEINKTITKSLHALMAFSEEQLIEQRYEKFKKIGVYDTL</sequence>
<accession>Q71Z95</accession>
<gene>
    <name evidence="1" type="primary">accA</name>
    <name type="ordered locus">LMOf2365_1594</name>
</gene>